<evidence type="ECO:0000255" key="1">
    <source>
        <dbReference type="HAMAP-Rule" id="MF_00229"/>
    </source>
</evidence>
<dbReference type="EC" id="4.3.1.3" evidence="1"/>
<dbReference type="EMBL" id="CP000113">
    <property type="protein sequence ID" value="ABF90953.1"/>
    <property type="molecule type" value="Genomic_DNA"/>
</dbReference>
<dbReference type="RefSeq" id="WP_011553498.1">
    <property type="nucleotide sequence ID" value="NC_008095.1"/>
</dbReference>
<dbReference type="SMR" id="Q1D6R1"/>
<dbReference type="STRING" id="246197.MXAN_3465"/>
<dbReference type="EnsemblBacteria" id="ABF90953">
    <property type="protein sequence ID" value="ABF90953"/>
    <property type="gene ID" value="MXAN_3465"/>
</dbReference>
<dbReference type="GeneID" id="41360812"/>
<dbReference type="KEGG" id="mxa:MXAN_3465"/>
<dbReference type="eggNOG" id="COG2986">
    <property type="taxonomic scope" value="Bacteria"/>
</dbReference>
<dbReference type="HOGENOM" id="CLU_014801_4_0_7"/>
<dbReference type="OrthoDB" id="9806955at2"/>
<dbReference type="UniPathway" id="UPA00379">
    <property type="reaction ID" value="UER00549"/>
</dbReference>
<dbReference type="Proteomes" id="UP000002402">
    <property type="component" value="Chromosome"/>
</dbReference>
<dbReference type="GO" id="GO:0005737">
    <property type="term" value="C:cytoplasm"/>
    <property type="evidence" value="ECO:0007669"/>
    <property type="project" value="UniProtKB-SubCell"/>
</dbReference>
<dbReference type="GO" id="GO:0004397">
    <property type="term" value="F:histidine ammonia-lyase activity"/>
    <property type="evidence" value="ECO:0007669"/>
    <property type="project" value="UniProtKB-UniRule"/>
</dbReference>
<dbReference type="GO" id="GO:0019556">
    <property type="term" value="P:L-histidine catabolic process to glutamate and formamide"/>
    <property type="evidence" value="ECO:0007669"/>
    <property type="project" value="UniProtKB-UniPathway"/>
</dbReference>
<dbReference type="GO" id="GO:0019557">
    <property type="term" value="P:L-histidine catabolic process to glutamate and formate"/>
    <property type="evidence" value="ECO:0007669"/>
    <property type="project" value="UniProtKB-UniPathway"/>
</dbReference>
<dbReference type="CDD" id="cd00332">
    <property type="entry name" value="PAL-HAL"/>
    <property type="match status" value="1"/>
</dbReference>
<dbReference type="FunFam" id="1.10.275.10:FF:000005">
    <property type="entry name" value="Histidine ammonia-lyase"/>
    <property type="match status" value="1"/>
</dbReference>
<dbReference type="FunFam" id="1.20.200.10:FF:000003">
    <property type="entry name" value="Histidine ammonia-lyase"/>
    <property type="match status" value="1"/>
</dbReference>
<dbReference type="Gene3D" id="1.20.200.10">
    <property type="entry name" value="Fumarase/aspartase (Central domain)"/>
    <property type="match status" value="1"/>
</dbReference>
<dbReference type="Gene3D" id="1.10.275.10">
    <property type="entry name" value="Fumarase/aspartase (N-terminal domain)"/>
    <property type="match status" value="1"/>
</dbReference>
<dbReference type="HAMAP" id="MF_00229">
    <property type="entry name" value="His_ammonia_lyase"/>
    <property type="match status" value="1"/>
</dbReference>
<dbReference type="InterPro" id="IPR001106">
    <property type="entry name" value="Aromatic_Lyase"/>
</dbReference>
<dbReference type="InterPro" id="IPR024083">
    <property type="entry name" value="Fumarase/histidase_N"/>
</dbReference>
<dbReference type="InterPro" id="IPR005921">
    <property type="entry name" value="HutH"/>
</dbReference>
<dbReference type="InterPro" id="IPR008948">
    <property type="entry name" value="L-Aspartase-like"/>
</dbReference>
<dbReference type="InterPro" id="IPR022313">
    <property type="entry name" value="Phe/His_NH3-lyase_AS"/>
</dbReference>
<dbReference type="NCBIfam" id="TIGR01225">
    <property type="entry name" value="hutH"/>
    <property type="match status" value="1"/>
</dbReference>
<dbReference type="NCBIfam" id="NF006871">
    <property type="entry name" value="PRK09367.1"/>
    <property type="match status" value="1"/>
</dbReference>
<dbReference type="PANTHER" id="PTHR10362">
    <property type="entry name" value="HISTIDINE AMMONIA-LYASE"/>
    <property type="match status" value="1"/>
</dbReference>
<dbReference type="Pfam" id="PF00221">
    <property type="entry name" value="Lyase_aromatic"/>
    <property type="match status" value="1"/>
</dbReference>
<dbReference type="SUPFAM" id="SSF48557">
    <property type="entry name" value="L-aspartase-like"/>
    <property type="match status" value="1"/>
</dbReference>
<dbReference type="PROSITE" id="PS00488">
    <property type="entry name" value="PAL_HISTIDASE"/>
    <property type="match status" value="1"/>
</dbReference>
<feature type="chain" id="PRO_1000021561" description="Histidine ammonia-lyase">
    <location>
        <begin position="1"/>
        <end position="508"/>
    </location>
</feature>
<feature type="modified residue" description="2,3-didehydroalanine (Ser)" evidence="1">
    <location>
        <position position="146"/>
    </location>
</feature>
<feature type="cross-link" description="5-imidazolinone (Ala-Gly)" evidence="1">
    <location>
        <begin position="145"/>
        <end position="147"/>
    </location>
</feature>
<name>HUTH_MYXXD</name>
<organism>
    <name type="scientific">Myxococcus xanthus (strain DK1622)</name>
    <dbReference type="NCBI Taxonomy" id="246197"/>
    <lineage>
        <taxon>Bacteria</taxon>
        <taxon>Pseudomonadati</taxon>
        <taxon>Myxococcota</taxon>
        <taxon>Myxococcia</taxon>
        <taxon>Myxococcales</taxon>
        <taxon>Cystobacterineae</taxon>
        <taxon>Myxococcaceae</taxon>
        <taxon>Myxococcus</taxon>
    </lineage>
</organism>
<comment type="catalytic activity">
    <reaction evidence="1">
        <text>L-histidine = trans-urocanate + NH4(+)</text>
        <dbReference type="Rhea" id="RHEA:21232"/>
        <dbReference type="ChEBI" id="CHEBI:17771"/>
        <dbReference type="ChEBI" id="CHEBI:28938"/>
        <dbReference type="ChEBI" id="CHEBI:57595"/>
        <dbReference type="EC" id="4.3.1.3"/>
    </reaction>
</comment>
<comment type="pathway">
    <text evidence="1">Amino-acid degradation; L-histidine degradation into L-glutamate; N-formimidoyl-L-glutamate from L-histidine: step 1/3.</text>
</comment>
<comment type="subcellular location">
    <subcellularLocation>
        <location evidence="1">Cytoplasm</location>
    </subcellularLocation>
</comment>
<comment type="PTM">
    <text evidence="1">Contains an active site 4-methylidene-imidazol-5-one (MIO), which is formed autocatalytically by cyclization and dehydration of residues Ala-Ser-Gly.</text>
</comment>
<comment type="similarity">
    <text evidence="1">Belongs to the PAL/histidase family.</text>
</comment>
<proteinExistence type="inferred from homology"/>
<sequence length="508" mass="54180">MSRPRILIDGDTLKLEEILQVARNEATVELSPDAATRVRASRALVDRVAAGDTPAYGINTGFGTLAEVRIDKKDLRDLQRNLILSHACGVGTPLPLPEARALLLLRCNVLAKGYSGIRMETLALALDMLNRDVVPVVPERGSVGASGDLAPLAHLALVFIGEGEAFYQGQRMPAKQALERAGLQPVVLEAKEGLALVNGTQAMCAVGTLLQLRAESLADIADVAGAMTLEGLLGSHKPFIPEIHDVRAHPGQKDVAAHLRRILVDSELVESHVNCSKVQDPYSLRCMPQVHGAAREGIAFSRRILEVEVNSATDNPLVFADTERIVSGGNFHGQPISLAMDVVAMALTQLSSISERRVEQLVNPSLSNLPAFLAKNSGLNSGFMIAQVTSAALVAESRVLSHPASVDSIPSSAGREDHVSMGMTAALKGRQVSDFARSCLAIEILVAAQALDFRLPLKPGKGALAAYELVRSKVPHMDKDRELHRDIEAVSQLVDSGELLAAVRSATA</sequence>
<reference key="1">
    <citation type="journal article" date="2006" name="Proc. Natl. Acad. Sci. U.S.A.">
        <title>Evolution of sensory complexity recorded in a myxobacterial genome.</title>
        <authorList>
            <person name="Goldman B.S."/>
            <person name="Nierman W.C."/>
            <person name="Kaiser D."/>
            <person name="Slater S.C."/>
            <person name="Durkin A.S."/>
            <person name="Eisen J.A."/>
            <person name="Ronning C.M."/>
            <person name="Barbazuk W.B."/>
            <person name="Blanchard M."/>
            <person name="Field C."/>
            <person name="Halling C."/>
            <person name="Hinkle G."/>
            <person name="Iartchuk O."/>
            <person name="Kim H.S."/>
            <person name="Mackenzie C."/>
            <person name="Madupu R."/>
            <person name="Miller N."/>
            <person name="Shvartsbeyn A."/>
            <person name="Sullivan S.A."/>
            <person name="Vaudin M."/>
            <person name="Wiegand R."/>
            <person name="Kaplan H.B."/>
        </authorList>
    </citation>
    <scope>NUCLEOTIDE SEQUENCE [LARGE SCALE GENOMIC DNA]</scope>
    <source>
        <strain>DK1622</strain>
    </source>
</reference>
<accession>Q1D6R1</accession>
<keyword id="KW-0963">Cytoplasm</keyword>
<keyword id="KW-0369">Histidine metabolism</keyword>
<keyword id="KW-0456">Lyase</keyword>
<keyword id="KW-1185">Reference proteome</keyword>
<protein>
    <recommendedName>
        <fullName evidence="1">Histidine ammonia-lyase</fullName>
        <shortName evidence="1">Histidase</shortName>
        <ecNumber evidence="1">4.3.1.3</ecNumber>
    </recommendedName>
</protein>
<gene>
    <name evidence="1" type="primary">hutH</name>
    <name type="ordered locus">MXAN_3465</name>
</gene>